<keyword id="KW-0963">Cytoplasm</keyword>
<keyword id="KW-0227">DNA damage</keyword>
<keyword id="KW-0233">DNA recombination</keyword>
<keyword id="KW-0234">DNA repair</keyword>
<keyword id="KW-0238">DNA-binding</keyword>
<sequence length="193" mass="20442">MIGRIAGILLEKNPPHLLVDCNGVGYEIDVPMSTFYNLPQTGERVVLLTQQIVREDAHLLYGFLTQQERTTFRELLKITGIGARMALAVLSGMSVQELAQAVTMQDAARLTRLPGIGKKTAERLLLELKGKLGADLGALAGAASPSDHATDILNALLALGYSEKEGLAAIKNVPAGTGVSEGIKLALKALSKA</sequence>
<reference key="1">
    <citation type="journal article" date="2009" name="J. Bacteriol.">
        <title>The genome of Burkholderia cenocepacia J2315, an epidemic pathogen of cystic fibrosis patients.</title>
        <authorList>
            <person name="Holden M.T."/>
            <person name="Seth-Smith H.M."/>
            <person name="Crossman L.C."/>
            <person name="Sebaihia M."/>
            <person name="Bentley S.D."/>
            <person name="Cerdeno-Tarraga A.M."/>
            <person name="Thomson N.R."/>
            <person name="Bason N."/>
            <person name="Quail M.A."/>
            <person name="Sharp S."/>
            <person name="Cherevach I."/>
            <person name="Churcher C."/>
            <person name="Goodhead I."/>
            <person name="Hauser H."/>
            <person name="Holroyd N."/>
            <person name="Mungall K."/>
            <person name="Scott P."/>
            <person name="Walker D."/>
            <person name="White B."/>
            <person name="Rose H."/>
            <person name="Iversen P."/>
            <person name="Mil-Homens D."/>
            <person name="Rocha E.P."/>
            <person name="Fialho A.M."/>
            <person name="Baldwin A."/>
            <person name="Dowson C."/>
            <person name="Barrell B.G."/>
            <person name="Govan J.R."/>
            <person name="Vandamme P."/>
            <person name="Hart C.A."/>
            <person name="Mahenthiralingam E."/>
            <person name="Parkhill J."/>
        </authorList>
    </citation>
    <scope>NUCLEOTIDE SEQUENCE [LARGE SCALE GENOMIC DNA]</scope>
    <source>
        <strain>ATCC BAA-245 / DSM 16553 / LMG 16656 / NCTC 13227 / J2315 / CF5610</strain>
    </source>
</reference>
<accession>B4EES6</accession>
<organism>
    <name type="scientific">Burkholderia cenocepacia (strain ATCC BAA-245 / DSM 16553 / LMG 16656 / NCTC 13227 / J2315 / CF5610)</name>
    <name type="common">Burkholderia cepacia (strain J2315)</name>
    <dbReference type="NCBI Taxonomy" id="216591"/>
    <lineage>
        <taxon>Bacteria</taxon>
        <taxon>Pseudomonadati</taxon>
        <taxon>Pseudomonadota</taxon>
        <taxon>Betaproteobacteria</taxon>
        <taxon>Burkholderiales</taxon>
        <taxon>Burkholderiaceae</taxon>
        <taxon>Burkholderia</taxon>
        <taxon>Burkholderia cepacia complex</taxon>
    </lineage>
</organism>
<feature type="chain" id="PRO_1000090291" description="Holliday junction branch migration complex subunit RuvA">
    <location>
        <begin position="1"/>
        <end position="193"/>
    </location>
</feature>
<feature type="region of interest" description="Domain I" evidence="1">
    <location>
        <begin position="1"/>
        <end position="64"/>
    </location>
</feature>
<feature type="region of interest" description="Domain II" evidence="1">
    <location>
        <begin position="65"/>
        <end position="139"/>
    </location>
</feature>
<feature type="region of interest" description="Flexible linker" evidence="1">
    <location>
        <begin position="139"/>
        <end position="143"/>
    </location>
</feature>
<feature type="region of interest" description="Domain III" evidence="1">
    <location>
        <begin position="144"/>
        <end position="193"/>
    </location>
</feature>
<dbReference type="EMBL" id="AM747720">
    <property type="protein sequence ID" value="CAR53661.1"/>
    <property type="molecule type" value="Genomic_DNA"/>
</dbReference>
<dbReference type="RefSeq" id="WP_006483429.1">
    <property type="nucleotide sequence ID" value="NC_011000.1"/>
</dbReference>
<dbReference type="SMR" id="B4EES6"/>
<dbReference type="GeneID" id="56557125"/>
<dbReference type="KEGG" id="bcj:BCAL3338"/>
<dbReference type="eggNOG" id="COG0632">
    <property type="taxonomic scope" value="Bacteria"/>
</dbReference>
<dbReference type="HOGENOM" id="CLU_087936_0_0_4"/>
<dbReference type="BioCyc" id="BCEN216591:G1G1V-3714-MONOMER"/>
<dbReference type="Proteomes" id="UP000001035">
    <property type="component" value="Chromosome 1"/>
</dbReference>
<dbReference type="GO" id="GO:0005737">
    <property type="term" value="C:cytoplasm"/>
    <property type="evidence" value="ECO:0007669"/>
    <property type="project" value="UniProtKB-SubCell"/>
</dbReference>
<dbReference type="GO" id="GO:0009379">
    <property type="term" value="C:Holliday junction helicase complex"/>
    <property type="evidence" value="ECO:0007669"/>
    <property type="project" value="InterPro"/>
</dbReference>
<dbReference type="GO" id="GO:0048476">
    <property type="term" value="C:Holliday junction resolvase complex"/>
    <property type="evidence" value="ECO:0007669"/>
    <property type="project" value="UniProtKB-UniRule"/>
</dbReference>
<dbReference type="GO" id="GO:0005524">
    <property type="term" value="F:ATP binding"/>
    <property type="evidence" value="ECO:0007669"/>
    <property type="project" value="InterPro"/>
</dbReference>
<dbReference type="GO" id="GO:0000400">
    <property type="term" value="F:four-way junction DNA binding"/>
    <property type="evidence" value="ECO:0007669"/>
    <property type="project" value="UniProtKB-UniRule"/>
</dbReference>
<dbReference type="GO" id="GO:0009378">
    <property type="term" value="F:four-way junction helicase activity"/>
    <property type="evidence" value="ECO:0007669"/>
    <property type="project" value="InterPro"/>
</dbReference>
<dbReference type="GO" id="GO:0006310">
    <property type="term" value="P:DNA recombination"/>
    <property type="evidence" value="ECO:0007669"/>
    <property type="project" value="UniProtKB-UniRule"/>
</dbReference>
<dbReference type="GO" id="GO:0006281">
    <property type="term" value="P:DNA repair"/>
    <property type="evidence" value="ECO:0007669"/>
    <property type="project" value="UniProtKB-UniRule"/>
</dbReference>
<dbReference type="CDD" id="cd14332">
    <property type="entry name" value="UBA_RuvA_C"/>
    <property type="match status" value="1"/>
</dbReference>
<dbReference type="Gene3D" id="1.10.150.20">
    <property type="entry name" value="5' to 3' exonuclease, C-terminal subdomain"/>
    <property type="match status" value="1"/>
</dbReference>
<dbReference type="Gene3D" id="1.10.8.10">
    <property type="entry name" value="DNA helicase RuvA subunit, C-terminal domain"/>
    <property type="match status" value="1"/>
</dbReference>
<dbReference type="Gene3D" id="2.40.50.140">
    <property type="entry name" value="Nucleic acid-binding proteins"/>
    <property type="match status" value="1"/>
</dbReference>
<dbReference type="HAMAP" id="MF_00031">
    <property type="entry name" value="DNA_HJ_migration_RuvA"/>
    <property type="match status" value="1"/>
</dbReference>
<dbReference type="InterPro" id="IPR013849">
    <property type="entry name" value="DNA_helicase_Holl-junc_RuvA_I"/>
</dbReference>
<dbReference type="InterPro" id="IPR003583">
    <property type="entry name" value="Hlx-hairpin-Hlx_DNA-bd_motif"/>
</dbReference>
<dbReference type="InterPro" id="IPR012340">
    <property type="entry name" value="NA-bd_OB-fold"/>
</dbReference>
<dbReference type="InterPro" id="IPR000085">
    <property type="entry name" value="RuvA"/>
</dbReference>
<dbReference type="InterPro" id="IPR010994">
    <property type="entry name" value="RuvA_2-like"/>
</dbReference>
<dbReference type="InterPro" id="IPR011114">
    <property type="entry name" value="RuvA_C"/>
</dbReference>
<dbReference type="InterPro" id="IPR036267">
    <property type="entry name" value="RuvA_C_sf"/>
</dbReference>
<dbReference type="NCBIfam" id="TIGR00084">
    <property type="entry name" value="ruvA"/>
    <property type="match status" value="1"/>
</dbReference>
<dbReference type="Pfam" id="PF14520">
    <property type="entry name" value="HHH_5"/>
    <property type="match status" value="1"/>
</dbReference>
<dbReference type="Pfam" id="PF07499">
    <property type="entry name" value="RuvA_C"/>
    <property type="match status" value="1"/>
</dbReference>
<dbReference type="Pfam" id="PF01330">
    <property type="entry name" value="RuvA_N"/>
    <property type="match status" value="1"/>
</dbReference>
<dbReference type="SMART" id="SM00278">
    <property type="entry name" value="HhH1"/>
    <property type="match status" value="2"/>
</dbReference>
<dbReference type="SUPFAM" id="SSF46929">
    <property type="entry name" value="DNA helicase RuvA subunit, C-terminal domain"/>
    <property type="match status" value="1"/>
</dbReference>
<dbReference type="SUPFAM" id="SSF50249">
    <property type="entry name" value="Nucleic acid-binding proteins"/>
    <property type="match status" value="1"/>
</dbReference>
<dbReference type="SUPFAM" id="SSF47781">
    <property type="entry name" value="RuvA domain 2-like"/>
    <property type="match status" value="1"/>
</dbReference>
<gene>
    <name evidence="1" type="primary">ruvA</name>
    <name type="ordered locus">BceJ2315_32770</name>
    <name type="ORF">BCAL3338</name>
</gene>
<protein>
    <recommendedName>
        <fullName evidence="1">Holliday junction branch migration complex subunit RuvA</fullName>
    </recommendedName>
</protein>
<proteinExistence type="inferred from homology"/>
<comment type="function">
    <text evidence="1">The RuvA-RuvB-RuvC complex processes Holliday junction (HJ) DNA during genetic recombination and DNA repair, while the RuvA-RuvB complex plays an important role in the rescue of blocked DNA replication forks via replication fork reversal (RFR). RuvA specifically binds to HJ cruciform DNA, conferring on it an open structure. The RuvB hexamer acts as an ATP-dependent pump, pulling dsDNA into and through the RuvAB complex. HJ branch migration allows RuvC to scan DNA until it finds its consensus sequence, where it cleaves and resolves the cruciform DNA.</text>
</comment>
<comment type="subunit">
    <text evidence="1">Homotetramer. Forms an RuvA(8)-RuvB(12)-Holliday junction (HJ) complex. HJ DNA is sandwiched between 2 RuvA tetramers; dsDNA enters through RuvA and exits via RuvB. An RuvB hexamer assembles on each DNA strand where it exits the tetramer. Each RuvB hexamer is contacted by two RuvA subunits (via domain III) on 2 adjacent RuvB subunits; this complex drives branch migration. In the full resolvosome a probable DNA-RuvA(4)-RuvB(12)-RuvC(2) complex forms which resolves the HJ.</text>
</comment>
<comment type="subcellular location">
    <subcellularLocation>
        <location evidence="1">Cytoplasm</location>
    </subcellularLocation>
</comment>
<comment type="domain">
    <text evidence="1">Has three domains with a flexible linker between the domains II and III and assumes an 'L' shape. Domain III is highly mobile and contacts RuvB.</text>
</comment>
<comment type="similarity">
    <text evidence="1">Belongs to the RuvA family.</text>
</comment>
<evidence type="ECO:0000255" key="1">
    <source>
        <dbReference type="HAMAP-Rule" id="MF_00031"/>
    </source>
</evidence>
<name>RUVA_BURCJ</name>